<reference key="1">
    <citation type="journal article" date="2006" name="J. Bacteriol.">
        <title>Living with genome instability: the adaptation of phytoplasmas to diverse environments of their insect and plant hosts.</title>
        <authorList>
            <person name="Bai X."/>
            <person name="Zhang J."/>
            <person name="Ewing A."/>
            <person name="Miller S.A."/>
            <person name="Jancso Radek A."/>
            <person name="Shevchenko D.V."/>
            <person name="Tsukerman K."/>
            <person name="Walunas T."/>
            <person name="Lapidus A."/>
            <person name="Campbell J.W."/>
            <person name="Hogenhout S.A."/>
        </authorList>
    </citation>
    <scope>NUCLEOTIDE SEQUENCE [LARGE SCALE GENOMIC DNA]</scope>
    <source>
        <strain>AYWB</strain>
    </source>
</reference>
<comment type="function">
    <text evidence="1">One of the early assembly proteins it binds 23S rRNA. One of the proteins that surrounds the polypeptide exit tunnel on the outside of the ribosome. Forms the main docking site for trigger factor binding to the ribosome.</text>
</comment>
<comment type="subunit">
    <text evidence="1">Part of the 50S ribosomal subunit. Contacts protein L29, and trigger factor when it is bound to the ribosome.</text>
</comment>
<comment type="similarity">
    <text evidence="1">Belongs to the universal ribosomal protein uL23 family.</text>
</comment>
<protein>
    <recommendedName>
        <fullName evidence="1">Large ribosomal subunit protein uL23</fullName>
    </recommendedName>
    <alternativeName>
        <fullName evidence="2">50S ribosomal protein L23</fullName>
    </alternativeName>
</protein>
<evidence type="ECO:0000255" key="1">
    <source>
        <dbReference type="HAMAP-Rule" id="MF_01369"/>
    </source>
</evidence>
<evidence type="ECO:0000305" key="2"/>
<gene>
    <name evidence="1" type="primary">rplW</name>
    <name type="ordered locus">AYWB_520</name>
</gene>
<organism>
    <name type="scientific">Aster yellows witches'-broom phytoplasma (strain AYWB)</name>
    <dbReference type="NCBI Taxonomy" id="322098"/>
    <lineage>
        <taxon>Bacteria</taxon>
        <taxon>Bacillati</taxon>
        <taxon>Mycoplasmatota</taxon>
        <taxon>Mollicutes</taxon>
        <taxon>Acholeplasmatales</taxon>
        <taxon>Acholeplasmataceae</taxon>
        <taxon>Candidatus Phytoplasma</taxon>
        <taxon>16SrI (Aster yellows group)</taxon>
    </lineage>
</organism>
<sequence length="96" mass="11023">MNKYYDLVKAPIITELTNKLIERQNKYTFKVAKTANKVEIKKALESIFQVKVLSVNTRNVLPQFKRKGKFEGYTSGYKKAICKLAPGQKIKILANE</sequence>
<accession>Q2NIV6</accession>
<keyword id="KW-0687">Ribonucleoprotein</keyword>
<keyword id="KW-0689">Ribosomal protein</keyword>
<keyword id="KW-0694">RNA-binding</keyword>
<keyword id="KW-0699">rRNA-binding</keyword>
<name>RL23_AYWBP</name>
<dbReference type="EMBL" id="CP000061">
    <property type="protein sequence ID" value="ABC65637.1"/>
    <property type="molecule type" value="Genomic_DNA"/>
</dbReference>
<dbReference type="RefSeq" id="WP_011412799.1">
    <property type="nucleotide sequence ID" value="NC_007716.1"/>
</dbReference>
<dbReference type="SMR" id="Q2NIV6"/>
<dbReference type="STRING" id="322098.AYWB_520"/>
<dbReference type="KEGG" id="ayw:AYWB_520"/>
<dbReference type="eggNOG" id="COG0089">
    <property type="taxonomic scope" value="Bacteria"/>
</dbReference>
<dbReference type="HOGENOM" id="CLU_037562_3_2_14"/>
<dbReference type="OrthoDB" id="9793353at2"/>
<dbReference type="PhylomeDB" id="Q2NIV6"/>
<dbReference type="Proteomes" id="UP000001934">
    <property type="component" value="Chromosome"/>
</dbReference>
<dbReference type="GO" id="GO:1990904">
    <property type="term" value="C:ribonucleoprotein complex"/>
    <property type="evidence" value="ECO:0007669"/>
    <property type="project" value="UniProtKB-KW"/>
</dbReference>
<dbReference type="GO" id="GO:0005840">
    <property type="term" value="C:ribosome"/>
    <property type="evidence" value="ECO:0007669"/>
    <property type="project" value="UniProtKB-KW"/>
</dbReference>
<dbReference type="GO" id="GO:0019843">
    <property type="term" value="F:rRNA binding"/>
    <property type="evidence" value="ECO:0007669"/>
    <property type="project" value="UniProtKB-UniRule"/>
</dbReference>
<dbReference type="GO" id="GO:0003735">
    <property type="term" value="F:structural constituent of ribosome"/>
    <property type="evidence" value="ECO:0007669"/>
    <property type="project" value="InterPro"/>
</dbReference>
<dbReference type="GO" id="GO:0006412">
    <property type="term" value="P:translation"/>
    <property type="evidence" value="ECO:0007669"/>
    <property type="project" value="UniProtKB-UniRule"/>
</dbReference>
<dbReference type="FunFam" id="3.30.70.330:FF:000001">
    <property type="entry name" value="50S ribosomal protein L23"/>
    <property type="match status" value="1"/>
</dbReference>
<dbReference type="Gene3D" id="3.30.70.330">
    <property type="match status" value="1"/>
</dbReference>
<dbReference type="HAMAP" id="MF_01369_B">
    <property type="entry name" value="Ribosomal_uL23_B"/>
    <property type="match status" value="1"/>
</dbReference>
<dbReference type="InterPro" id="IPR012677">
    <property type="entry name" value="Nucleotide-bd_a/b_plait_sf"/>
</dbReference>
<dbReference type="InterPro" id="IPR013025">
    <property type="entry name" value="Ribosomal_uL23-like"/>
</dbReference>
<dbReference type="InterPro" id="IPR012678">
    <property type="entry name" value="Ribosomal_uL23/eL15/eS24_sf"/>
</dbReference>
<dbReference type="NCBIfam" id="NF004363">
    <property type="entry name" value="PRK05738.2-4"/>
    <property type="match status" value="1"/>
</dbReference>
<dbReference type="PANTHER" id="PTHR11620">
    <property type="entry name" value="60S RIBOSOMAL PROTEIN L23A"/>
    <property type="match status" value="1"/>
</dbReference>
<dbReference type="Pfam" id="PF00276">
    <property type="entry name" value="Ribosomal_L23"/>
    <property type="match status" value="1"/>
</dbReference>
<dbReference type="SUPFAM" id="SSF54189">
    <property type="entry name" value="Ribosomal proteins S24e, L23 and L15e"/>
    <property type="match status" value="1"/>
</dbReference>
<feature type="chain" id="PRO_1000215023" description="Large ribosomal subunit protein uL23">
    <location>
        <begin position="1"/>
        <end position="96"/>
    </location>
</feature>
<proteinExistence type="inferred from homology"/>